<proteinExistence type="inferred from homology"/>
<evidence type="ECO:0000250" key="1">
    <source>
        <dbReference type="UniProtKB" id="O64204"/>
    </source>
</evidence>
<evidence type="ECO:0000255" key="2"/>
<evidence type="ECO:0000305" key="3"/>
<reference key="1">
    <citation type="journal article" date="1996" name="Mol. Microbiol.">
        <title>Sequence analysis and molecular characterization of the temperate lactococcal bacteriophage r1t.</title>
        <authorList>
            <person name="van Sinderen D."/>
            <person name="Karsens H."/>
            <person name="Kok J."/>
            <person name="Terpstra P."/>
            <person name="Ruiters M.H."/>
            <person name="Venema G."/>
            <person name="Nauta A."/>
        </authorList>
    </citation>
    <scope>NUCLEOTIDE SEQUENCE [GENOMIC DNA]</scope>
</reference>
<sequence length="75" mass="7688">MKTFFKDMAERAIKTFAQAMIGALGAGATGLIGVDWLQALSIAGFATVVSILTSLASGIPGDNTASLVNNKKEGE</sequence>
<organismHost>
    <name type="scientific">Lactococcus lactis subsp. cremoris</name>
    <name type="common">Streptococcus cremoris</name>
    <dbReference type="NCBI Taxonomy" id="1359"/>
</organismHost>
<keyword id="KW-0204">Cytolysis</keyword>
<keyword id="KW-1030">Host cell inner membrane</keyword>
<keyword id="KW-0578">Host cell lysis by virus</keyword>
<keyword id="KW-1032">Host cell membrane</keyword>
<keyword id="KW-1043">Host membrane</keyword>
<keyword id="KW-0472">Membrane</keyword>
<keyword id="KW-1185">Reference proteome</keyword>
<keyword id="KW-0812">Transmembrane</keyword>
<keyword id="KW-1133">Transmembrane helix</keyword>
<keyword id="KW-1188">Viral release from host cell</keyword>
<protein>
    <recommendedName>
        <fullName>Holin</fullName>
    </recommendedName>
</protein>
<accession>Q38134</accession>
<feature type="chain" id="PRO_0000077801" description="Holin">
    <location>
        <begin position="1"/>
        <end position="75"/>
    </location>
</feature>
<feature type="transmembrane region" description="Helical" evidence="2">
    <location>
        <begin position="16"/>
        <end position="36"/>
    </location>
</feature>
<feature type="transmembrane region" description="Helical" evidence="2">
    <location>
        <begin position="39"/>
        <end position="59"/>
    </location>
</feature>
<organism>
    <name type="scientific">Lactococcus phage r1t</name>
    <name type="common">Bacteriophage r1t</name>
    <dbReference type="NCBI Taxonomy" id="43685"/>
    <lineage>
        <taxon>Viruses</taxon>
        <taxon>Duplodnaviria</taxon>
        <taxon>Heunggongvirae</taxon>
        <taxon>Uroviricota</taxon>
        <taxon>Caudoviricetes</taxon>
    </lineage>
</organism>
<comment type="function">
    <text evidence="1">Accumulates harmlessly in the cytoplasmic membrane until it reaches a critical concentration that triggers the formation of micron-scale pores (holes) causing host cell membrane disruption and endolysin escape into the periplasmic space. Determines the precise timing of host cell lysis. Participates with the endolysin protein in the sequential events which lead to the programmed host cell lysis releasing the mature viral particles from the host cell.</text>
</comment>
<comment type="subunit">
    <text evidence="3">Homomultimer.</text>
</comment>
<comment type="subcellular location">
    <subcellularLocation>
        <location>Host cell inner membrane</location>
        <topology evidence="3">Multi-pass membrane protein</topology>
    </subcellularLocation>
</comment>
<name>HOLIN_BPR1T</name>
<dbReference type="EMBL" id="U38906">
    <property type="protein sequence ID" value="AAB18723.1"/>
    <property type="molecule type" value="Genomic_DNA"/>
</dbReference>
<dbReference type="RefSeq" id="NP_695076.1">
    <property type="nucleotide sequence ID" value="NC_004302.1"/>
</dbReference>
<dbReference type="TCDB" id="1.E.18.1.1">
    <property type="family name" value="the lactococcus lactis phage r1t holin (r1t holin) family"/>
</dbReference>
<dbReference type="GeneID" id="955473"/>
<dbReference type="KEGG" id="vg:955473"/>
<dbReference type="Proteomes" id="UP000001164">
    <property type="component" value="Genome"/>
</dbReference>
<dbReference type="GO" id="GO:0020002">
    <property type="term" value="C:host cell plasma membrane"/>
    <property type="evidence" value="ECO:0007669"/>
    <property type="project" value="UniProtKB-SubCell"/>
</dbReference>
<dbReference type="GO" id="GO:0016020">
    <property type="term" value="C:membrane"/>
    <property type="evidence" value="ECO:0007669"/>
    <property type="project" value="UniProtKB-KW"/>
</dbReference>
<dbReference type="GO" id="GO:0031640">
    <property type="term" value="P:killing of cells of another organism"/>
    <property type="evidence" value="ECO:0007669"/>
    <property type="project" value="UniProtKB-KW"/>
</dbReference>
<dbReference type="InterPro" id="IPR020109">
    <property type="entry name" value="Holin_r1t"/>
</dbReference>
<dbReference type="Pfam" id="PF16945">
    <property type="entry name" value="Phage_r1t_holin"/>
    <property type="match status" value="1"/>
</dbReference>